<proteinExistence type="evidence at transcript level"/>
<sequence>MKGGNYTSLGTCSGINVSGNVAGTRKMSLGKSIKMYLTIFILTTCIYMALYQYHISREPFAASEVVKHQEKSSSYIASYLWSPISLLMANSSSNTNNNSTTTSTTTTTAPTTPTTTTTTTVGSVGQKLGASSISSIRMVSLAATIPSFKSTLSESRSVSLGGHQKTATVKTSTTITTRTTASGLATTKLSATTRTTAKTSAKLSAATTPTASHMENGYKTRPTFVAASLPPPLYIITPTYRRPEQLAELTRLGYTLKHVVNLLWLVIEDANKTNPLVGHTLDRIGVPYEYMVAPMPEKYKQTKKAKPRGVSNRNRGLEYLREHATEGVLYFADDDNTYDISIFEQMRYISKVAMWPVGLVTKTGVSSPIIQAGKLVGYYDGWIGGRKYPVDMAGFAVSVKFLKERPNAQMPFKPGYEEDGFLRSLAPLDDAEIELLADECRDILTWHTQTKKNAPAQALNRTRYKNTNLEHIDRLLVRP</sequence>
<keyword id="KW-0025">Alternative splicing</keyword>
<keyword id="KW-0325">Glycoprotein</keyword>
<keyword id="KW-0333">Golgi apparatus</keyword>
<keyword id="KW-0464">Manganese</keyword>
<keyword id="KW-0472">Membrane</keyword>
<keyword id="KW-0479">Metal-binding</keyword>
<keyword id="KW-1185">Reference proteome</keyword>
<keyword id="KW-0735">Signal-anchor</keyword>
<keyword id="KW-0808">Transferase</keyword>
<keyword id="KW-0812">Transmembrane</keyword>
<keyword id="KW-1133">Transmembrane helix</keyword>
<reference evidence="11" key="1">
    <citation type="journal article" date="2003" name="J. Biol. Chem.">
        <title>Identification and characterization of three Drosophila melanogaster glucuronyltransferases responsible for the synthesis of the conserved glycosaminoglycan-protein linkage region of proteoglycans: two novel homologs exhibit broad specificity toward oligosaccharides from proteoglycans, glycoproteins, and glycosphingolipids.</title>
        <authorList>
            <person name="Kim B.-T."/>
            <person name="Tsuchida K."/>
            <person name="Lincecum J."/>
            <person name="Kitagawa K."/>
            <person name="Bernfield M."/>
            <person name="Sugahara K."/>
        </authorList>
    </citation>
    <scope>NUCLEOTIDE SEQUENCE [MRNA] (ISOFORM C)</scope>
    <scope>FUNCTION</scope>
    <scope>COFACTOR</scope>
    <scope>DEVELOPMENTAL STAGE</scope>
</reference>
<reference evidence="11" key="2">
    <citation type="journal article" date="2000" name="Science">
        <title>The genome sequence of Drosophila melanogaster.</title>
        <authorList>
            <person name="Adams M.D."/>
            <person name="Celniker S.E."/>
            <person name="Holt R.A."/>
            <person name="Evans C.A."/>
            <person name="Gocayne J.D."/>
            <person name="Amanatides P.G."/>
            <person name="Scherer S.E."/>
            <person name="Li P.W."/>
            <person name="Hoskins R.A."/>
            <person name="Galle R.F."/>
            <person name="George R.A."/>
            <person name="Lewis S.E."/>
            <person name="Richards S."/>
            <person name="Ashburner M."/>
            <person name="Henderson S.N."/>
            <person name="Sutton G.G."/>
            <person name="Wortman J.R."/>
            <person name="Yandell M.D."/>
            <person name="Zhang Q."/>
            <person name="Chen L.X."/>
            <person name="Brandon R.C."/>
            <person name="Rogers Y.-H.C."/>
            <person name="Blazej R.G."/>
            <person name="Champe M."/>
            <person name="Pfeiffer B.D."/>
            <person name="Wan K.H."/>
            <person name="Doyle C."/>
            <person name="Baxter E.G."/>
            <person name="Helt G."/>
            <person name="Nelson C.R."/>
            <person name="Miklos G.L.G."/>
            <person name="Abril J.F."/>
            <person name="Agbayani A."/>
            <person name="An H.-J."/>
            <person name="Andrews-Pfannkoch C."/>
            <person name="Baldwin D."/>
            <person name="Ballew R.M."/>
            <person name="Basu A."/>
            <person name="Baxendale J."/>
            <person name="Bayraktaroglu L."/>
            <person name="Beasley E.M."/>
            <person name="Beeson K.Y."/>
            <person name="Benos P.V."/>
            <person name="Berman B.P."/>
            <person name="Bhandari D."/>
            <person name="Bolshakov S."/>
            <person name="Borkova D."/>
            <person name="Botchan M.R."/>
            <person name="Bouck J."/>
            <person name="Brokstein P."/>
            <person name="Brottier P."/>
            <person name="Burtis K.C."/>
            <person name="Busam D.A."/>
            <person name="Butler H."/>
            <person name="Cadieu E."/>
            <person name="Center A."/>
            <person name="Chandra I."/>
            <person name="Cherry J.M."/>
            <person name="Cawley S."/>
            <person name="Dahlke C."/>
            <person name="Davenport L.B."/>
            <person name="Davies P."/>
            <person name="de Pablos B."/>
            <person name="Delcher A."/>
            <person name="Deng Z."/>
            <person name="Mays A.D."/>
            <person name="Dew I."/>
            <person name="Dietz S.M."/>
            <person name="Dodson K."/>
            <person name="Doup L.E."/>
            <person name="Downes M."/>
            <person name="Dugan-Rocha S."/>
            <person name="Dunkov B.C."/>
            <person name="Dunn P."/>
            <person name="Durbin K.J."/>
            <person name="Evangelista C.C."/>
            <person name="Ferraz C."/>
            <person name="Ferriera S."/>
            <person name="Fleischmann W."/>
            <person name="Fosler C."/>
            <person name="Gabrielian A.E."/>
            <person name="Garg N.S."/>
            <person name="Gelbart W.M."/>
            <person name="Glasser K."/>
            <person name="Glodek A."/>
            <person name="Gong F."/>
            <person name="Gorrell J.H."/>
            <person name="Gu Z."/>
            <person name="Guan P."/>
            <person name="Harris M."/>
            <person name="Harris N.L."/>
            <person name="Harvey D.A."/>
            <person name="Heiman T.J."/>
            <person name="Hernandez J.R."/>
            <person name="Houck J."/>
            <person name="Hostin D."/>
            <person name="Houston K.A."/>
            <person name="Howland T.J."/>
            <person name="Wei M.-H."/>
            <person name="Ibegwam C."/>
            <person name="Jalali M."/>
            <person name="Kalush F."/>
            <person name="Karpen G.H."/>
            <person name="Ke Z."/>
            <person name="Kennison J.A."/>
            <person name="Ketchum K.A."/>
            <person name="Kimmel B.E."/>
            <person name="Kodira C.D."/>
            <person name="Kraft C.L."/>
            <person name="Kravitz S."/>
            <person name="Kulp D."/>
            <person name="Lai Z."/>
            <person name="Lasko P."/>
            <person name="Lei Y."/>
            <person name="Levitsky A.A."/>
            <person name="Li J.H."/>
            <person name="Li Z."/>
            <person name="Liang Y."/>
            <person name="Lin X."/>
            <person name="Liu X."/>
            <person name="Mattei B."/>
            <person name="McIntosh T.C."/>
            <person name="McLeod M.P."/>
            <person name="McPherson D."/>
            <person name="Merkulov G."/>
            <person name="Milshina N.V."/>
            <person name="Mobarry C."/>
            <person name="Morris J."/>
            <person name="Moshrefi A."/>
            <person name="Mount S.M."/>
            <person name="Moy M."/>
            <person name="Murphy B."/>
            <person name="Murphy L."/>
            <person name="Muzny D.M."/>
            <person name="Nelson D.L."/>
            <person name="Nelson D.R."/>
            <person name="Nelson K.A."/>
            <person name="Nixon K."/>
            <person name="Nusskern D.R."/>
            <person name="Pacleb J.M."/>
            <person name="Palazzolo M."/>
            <person name="Pittman G.S."/>
            <person name="Pan S."/>
            <person name="Pollard J."/>
            <person name="Puri V."/>
            <person name="Reese M.G."/>
            <person name="Reinert K."/>
            <person name="Remington K."/>
            <person name="Saunders R.D.C."/>
            <person name="Scheeler F."/>
            <person name="Shen H."/>
            <person name="Shue B.C."/>
            <person name="Siden-Kiamos I."/>
            <person name="Simpson M."/>
            <person name="Skupski M.P."/>
            <person name="Smith T.J."/>
            <person name="Spier E."/>
            <person name="Spradling A.C."/>
            <person name="Stapleton M."/>
            <person name="Strong R."/>
            <person name="Sun E."/>
            <person name="Svirskas R."/>
            <person name="Tector C."/>
            <person name="Turner R."/>
            <person name="Venter E."/>
            <person name="Wang A.H."/>
            <person name="Wang X."/>
            <person name="Wang Z.-Y."/>
            <person name="Wassarman D.A."/>
            <person name="Weinstock G.M."/>
            <person name="Weissenbach J."/>
            <person name="Williams S.M."/>
            <person name="Woodage T."/>
            <person name="Worley K.C."/>
            <person name="Wu D."/>
            <person name="Yang S."/>
            <person name="Yao Q.A."/>
            <person name="Ye J."/>
            <person name="Yeh R.-F."/>
            <person name="Zaveri J.S."/>
            <person name="Zhan M."/>
            <person name="Zhang G."/>
            <person name="Zhao Q."/>
            <person name="Zheng L."/>
            <person name="Zheng X.H."/>
            <person name="Zhong F.N."/>
            <person name="Zhong W."/>
            <person name="Zhou X."/>
            <person name="Zhu S.C."/>
            <person name="Zhu X."/>
            <person name="Smith H.O."/>
            <person name="Gibbs R.A."/>
            <person name="Myers E.W."/>
            <person name="Rubin G.M."/>
            <person name="Venter J.C."/>
        </authorList>
    </citation>
    <scope>NUCLEOTIDE SEQUENCE [LARGE SCALE GENOMIC DNA]</scope>
    <source>
        <strain evidence="4">Berkeley</strain>
    </source>
</reference>
<reference evidence="11" key="3">
    <citation type="journal article" date="2002" name="Genome Biol.">
        <title>Annotation of the Drosophila melanogaster euchromatic genome: a systematic review.</title>
        <authorList>
            <person name="Misra S."/>
            <person name="Crosby M.A."/>
            <person name="Mungall C.J."/>
            <person name="Matthews B.B."/>
            <person name="Campbell K.S."/>
            <person name="Hradecky P."/>
            <person name="Huang Y."/>
            <person name="Kaminker J.S."/>
            <person name="Millburn G.H."/>
            <person name="Prochnik S.E."/>
            <person name="Smith C.D."/>
            <person name="Tupy J.L."/>
            <person name="Whitfield E.J."/>
            <person name="Bayraktaroglu L."/>
            <person name="Berman B.P."/>
            <person name="Bettencourt B.R."/>
            <person name="Celniker S.E."/>
            <person name="de Grey A.D.N.J."/>
            <person name="Drysdale R.A."/>
            <person name="Harris N.L."/>
            <person name="Richter J."/>
            <person name="Russo S."/>
            <person name="Schroeder A.J."/>
            <person name="Shu S.Q."/>
            <person name="Stapleton M."/>
            <person name="Yamada C."/>
            <person name="Ashburner M."/>
            <person name="Gelbart W.M."/>
            <person name="Rubin G.M."/>
            <person name="Lewis S.E."/>
        </authorList>
    </citation>
    <scope>GENOME REANNOTATION</scope>
    <scope>ALTERNATIVE SPLICING</scope>
    <source>
        <strain>Berkeley</strain>
    </source>
</reference>
<reference evidence="11" key="4">
    <citation type="journal article" date="2002" name="Genome Biol.">
        <title>A Drosophila full-length cDNA resource.</title>
        <authorList>
            <person name="Stapleton M."/>
            <person name="Carlson J.W."/>
            <person name="Brokstein P."/>
            <person name="Yu C."/>
            <person name="Champe M."/>
            <person name="George R.A."/>
            <person name="Guarin H."/>
            <person name="Kronmiller B."/>
            <person name="Pacleb J.M."/>
            <person name="Park S."/>
            <person name="Wan K.H."/>
            <person name="Rubin G.M."/>
            <person name="Celniker S.E."/>
        </authorList>
    </citation>
    <scope>NUCLEOTIDE SEQUENCE [LARGE SCALE MRNA] (ISOFORMS A AND C)</scope>
    <source>
        <strain evidence="6">Berkeley</strain>
        <tissue evidence="6">Embryo</tissue>
    </source>
</reference>
<reference key="5">
    <citation type="submission" date="2005-03" db="EMBL/GenBank/DDBJ databases">
        <authorList>
            <person name="Stapleton M."/>
            <person name="Carlson J.W."/>
            <person name="Chavez C."/>
            <person name="Frise E."/>
            <person name="George R.A."/>
            <person name="Pacleb J.M."/>
            <person name="Park S."/>
            <person name="Wan K.H."/>
            <person name="Yu C."/>
            <person name="Rubin G.M."/>
            <person name="Celniker S.E."/>
        </authorList>
    </citation>
    <scope>NUCLEOTIDE SEQUENCE [LARGE SCALE MRNA] (ISOFORM C)</scope>
    <source>
        <strain>Berkeley</strain>
        <tissue>Embryo</tissue>
    </source>
</reference>
<evidence type="ECO:0000250" key="1"/>
<evidence type="ECO:0000255" key="2"/>
<evidence type="ECO:0000256" key="3">
    <source>
        <dbReference type="SAM" id="MobiDB-lite"/>
    </source>
</evidence>
<evidence type="ECO:0000269" key="4">
    <source>
    </source>
</evidence>
<evidence type="ECO:0000269" key="5">
    <source>
    </source>
</evidence>
<evidence type="ECO:0000269" key="6">
    <source>
    </source>
</evidence>
<evidence type="ECO:0000303" key="7">
    <source>
    </source>
</evidence>
<evidence type="ECO:0000303" key="8">
    <source>
    </source>
</evidence>
<evidence type="ECO:0000303" key="9">
    <source>
    </source>
</evidence>
<evidence type="ECO:0000303" key="10">
    <source ref="5"/>
</evidence>
<evidence type="ECO:0000305" key="11"/>
<evidence type="ECO:0000312" key="12">
    <source>
        <dbReference type="EMBL" id="AAM50785.1"/>
    </source>
</evidence>
<comment type="function">
    <text evidence="5">Involved in the biosynthesis of L2/HNK-1 carbohydrate epitope on both glycolipids and glycoproteins. Enzyme has a broad specificity.</text>
</comment>
<comment type="catalytic activity">
    <reaction evidence="5">
        <text>3-O-(beta-D-galactosyl-(1-&gt;3)-beta-D-galactosyl-(1-&gt;4)-beta-D-xylosyl)-L-seryl-[protein] + UDP-alpha-D-glucuronate = 3-O-(beta-D-GlcA-(1-&gt;3)-beta-D-Gal-(1-&gt;3)-beta-D-Gal-(1-&gt;4)-beta-D-Xyl)-L-seryl-[protein] + UDP + H(+)</text>
        <dbReference type="Rhea" id="RHEA:24168"/>
        <dbReference type="Rhea" id="RHEA-COMP:12571"/>
        <dbReference type="Rhea" id="RHEA-COMP:12573"/>
        <dbReference type="ChEBI" id="CHEBI:15378"/>
        <dbReference type="ChEBI" id="CHEBI:58052"/>
        <dbReference type="ChEBI" id="CHEBI:58223"/>
        <dbReference type="ChEBI" id="CHEBI:132090"/>
        <dbReference type="ChEBI" id="CHEBI:132093"/>
        <dbReference type="EC" id="2.4.1.135"/>
    </reaction>
</comment>
<comment type="cofactor">
    <cofactor evidence="5">
        <name>Mn(2+)</name>
        <dbReference type="ChEBI" id="CHEBI:29035"/>
    </cofactor>
</comment>
<comment type="pathway">
    <text>Protein modification; protein glycosylation.</text>
</comment>
<comment type="subcellular location">
    <subcellularLocation>
        <location evidence="11">Golgi apparatus membrane</location>
        <topology evidence="11">Single-pass type II membrane protein</topology>
    </subcellularLocation>
</comment>
<comment type="alternative products">
    <event type="alternative splicing"/>
    <isoform>
        <id>Q9VTG7-1</id>
        <name evidence="7">A</name>
        <sequence type="displayed"/>
    </isoform>
    <isoform>
        <id>Q9VTG7-2</id>
        <name evidence="7">C</name>
        <name>B</name>
        <sequence type="described" ref="VSP_050626"/>
    </isoform>
</comment>
<comment type="developmental stage">
    <text evidence="5">Expressed from early embryos to adults; maximal expression in third instar larvae through to adulthood.</text>
</comment>
<comment type="similarity">
    <text evidence="11">Belongs to the glycosyltransferase 43 family.</text>
</comment>
<comment type="sequence caution" evidence="11">
    <conflict type="erroneous initiation">
        <sequence resource="EMBL-CDS" id="AAL28683"/>
    </conflict>
</comment>
<name>B3G2P_DROME</name>
<gene>
    <name type="primary">GlcAT-P</name>
    <name type="synonym">GLCAT-BSII</name>
    <name type="ORF">CG6207</name>
</gene>
<protein>
    <recommendedName>
        <fullName>Galactosylgalactosylxylosylprotein 3-beta-glucuronosyltransferase P</fullName>
        <ecNumber evidence="5">2.4.1.135</ecNumber>
    </recommendedName>
    <alternativeName>
        <fullName>Beta-1,3-glucuronyltransferase P</fullName>
    </alternativeName>
    <alternativeName>
        <fullName>Glucuronosyltransferase P</fullName>
        <shortName>GlcAT-P</shortName>
    </alternativeName>
    <alternativeName>
        <fullName>UDP-glucuronosyltransferase P</fullName>
        <shortName>DmGlcAT-BSII</shortName>
    </alternativeName>
</protein>
<feature type="chain" id="PRO_0000195180" description="Galactosylgalactosylxylosylprotein 3-beta-glucuronosyltransferase P">
    <location>
        <begin position="1"/>
        <end position="479"/>
    </location>
</feature>
<feature type="topological domain" description="Cytoplasmic" evidence="2">
    <location>
        <begin position="1"/>
        <end position="34"/>
    </location>
</feature>
<feature type="transmembrane region" description="Helical; Signal-anchor for type II membrane protein" evidence="2">
    <location>
        <begin position="35"/>
        <end position="50"/>
    </location>
</feature>
<feature type="topological domain" description="Lumenal" evidence="2">
    <location>
        <begin position="51"/>
        <end position="479"/>
    </location>
</feature>
<feature type="region of interest" description="Disordered" evidence="3">
    <location>
        <begin position="94"/>
        <end position="122"/>
    </location>
</feature>
<feature type="compositionally biased region" description="Low complexity" evidence="3">
    <location>
        <begin position="94"/>
        <end position="120"/>
    </location>
</feature>
<feature type="active site" description="Proton acceptor" evidence="1">
    <location>
        <position position="418"/>
    </location>
</feature>
<feature type="binding site" evidence="1">
    <location>
        <position position="335"/>
    </location>
    <ligand>
        <name>Mn(2+)</name>
        <dbReference type="ChEBI" id="CHEBI:29035"/>
    </ligand>
</feature>
<feature type="glycosylation site" description="N-linked (GlcNAc...) asparagine" evidence="2">
    <location>
        <position position="90"/>
    </location>
</feature>
<feature type="glycosylation site" description="N-linked (GlcNAc...) asparagine" evidence="2">
    <location>
        <position position="97"/>
    </location>
</feature>
<feature type="glycosylation site" description="N-linked (GlcNAc...) asparagine" evidence="2">
    <location>
        <position position="98"/>
    </location>
</feature>
<feature type="glycosylation site" description="N-linked (GlcNAc...) asparagine" evidence="2">
    <location>
        <position position="271"/>
    </location>
</feature>
<feature type="glycosylation site" description="N-linked (GlcNAc...) asparagine" evidence="2">
    <location>
        <position position="460"/>
    </location>
</feature>
<feature type="splice variant" id="VSP_050626" description="In isoform C." evidence="7 8 9 10">
    <location>
        <begin position="68"/>
        <end position="230"/>
    </location>
</feature>
<dbReference type="EC" id="2.4.1.135" evidence="5"/>
<dbReference type="EMBL" id="AB080697">
    <property type="protein sequence ID" value="BAC65097.1"/>
    <property type="molecule type" value="mRNA"/>
</dbReference>
<dbReference type="EMBL" id="AE014296">
    <property type="protein sequence ID" value="AAF50082.1"/>
    <property type="molecule type" value="Genomic_DNA"/>
</dbReference>
<dbReference type="EMBL" id="AE014296">
    <property type="protein sequence ID" value="AAN11882.2"/>
    <property type="molecule type" value="Genomic_DNA"/>
</dbReference>
<dbReference type="EMBL" id="AY061135">
    <property type="protein sequence ID" value="AAL28683.1"/>
    <property type="status" value="ALT_INIT"/>
    <property type="molecule type" value="mRNA"/>
</dbReference>
<dbReference type="EMBL" id="AY118925">
    <property type="protein sequence ID" value="AAM50785.1"/>
    <property type="molecule type" value="mRNA"/>
</dbReference>
<dbReference type="EMBL" id="BT021381">
    <property type="protein sequence ID" value="AAX33529.1"/>
    <property type="molecule type" value="mRNA"/>
</dbReference>
<dbReference type="RefSeq" id="NP_001014581.1">
    <molecule id="Q9VTG7-2"/>
    <property type="nucleotide sequence ID" value="NM_001014581.3"/>
</dbReference>
<dbReference type="RefSeq" id="NP_001246713.1">
    <molecule id="Q9VTG7-1"/>
    <property type="nucleotide sequence ID" value="NM_001259784.2"/>
</dbReference>
<dbReference type="RefSeq" id="NP_001246714.1">
    <molecule id="Q9VTG7-2"/>
    <property type="nucleotide sequence ID" value="NM_001259785.2"/>
</dbReference>
<dbReference type="RefSeq" id="NP_648448.1">
    <molecule id="Q9VTG7-1"/>
    <property type="nucleotide sequence ID" value="NM_140191.3"/>
</dbReference>
<dbReference type="RefSeq" id="NP_729685.2">
    <molecule id="Q9VTG7-2"/>
    <property type="nucleotide sequence ID" value="NM_168451.4"/>
</dbReference>
<dbReference type="SMR" id="Q9VTG7"/>
<dbReference type="BioGRID" id="64634">
    <property type="interactions" value="3"/>
</dbReference>
<dbReference type="FunCoup" id="Q9VTG7">
    <property type="interactions" value="169"/>
</dbReference>
<dbReference type="IntAct" id="Q9VTG7">
    <property type="interactions" value="1"/>
</dbReference>
<dbReference type="STRING" id="7227.FBpp0075919"/>
<dbReference type="CAZy" id="GT43">
    <property type="family name" value="Glycosyltransferase Family 43"/>
</dbReference>
<dbReference type="GlyCosmos" id="Q9VTG7">
    <property type="glycosylation" value="5 sites, No reported glycans"/>
</dbReference>
<dbReference type="GlyGen" id="Q9VTG7">
    <property type="glycosylation" value="5 sites"/>
</dbReference>
<dbReference type="PaxDb" id="7227-FBpp0075919"/>
<dbReference type="DNASU" id="39262"/>
<dbReference type="EnsemblMetazoa" id="FBtr0076189">
    <molecule id="Q9VTG7-1"/>
    <property type="protein sequence ID" value="FBpp0075919"/>
    <property type="gene ID" value="FBgn0036144"/>
</dbReference>
<dbReference type="EnsemblMetazoa" id="FBtr0076190">
    <molecule id="Q9VTG7-2"/>
    <property type="protein sequence ID" value="FBpp0075920"/>
    <property type="gene ID" value="FBgn0036144"/>
</dbReference>
<dbReference type="EnsemblMetazoa" id="FBtr0100422">
    <molecule id="Q9VTG7-2"/>
    <property type="protein sequence ID" value="FBpp0099840"/>
    <property type="gene ID" value="FBgn0036144"/>
</dbReference>
<dbReference type="EnsemblMetazoa" id="FBtr0306254">
    <molecule id="Q9VTG7-1"/>
    <property type="protein sequence ID" value="FBpp0297364"/>
    <property type="gene ID" value="FBgn0036144"/>
</dbReference>
<dbReference type="EnsemblMetazoa" id="FBtr0306255">
    <molecule id="Q9VTG7-2"/>
    <property type="protein sequence ID" value="FBpp0297365"/>
    <property type="gene ID" value="FBgn0036144"/>
</dbReference>
<dbReference type="GeneID" id="39262"/>
<dbReference type="KEGG" id="dme:Dmel_CG6207"/>
<dbReference type="UCSC" id="CG6207-RA">
    <molecule id="Q9VTG7-1"/>
    <property type="organism name" value="d. melanogaster"/>
</dbReference>
<dbReference type="AGR" id="FB:FBgn0036144"/>
<dbReference type="CTD" id="39262"/>
<dbReference type="FlyBase" id="FBgn0036144">
    <property type="gene designation" value="GlcAT-P"/>
</dbReference>
<dbReference type="VEuPathDB" id="VectorBase:FBgn0036144"/>
<dbReference type="eggNOG" id="KOG1476">
    <property type="taxonomic scope" value="Eukaryota"/>
</dbReference>
<dbReference type="HOGENOM" id="CLU_045177_3_2_1"/>
<dbReference type="InParanoid" id="Q9VTG7"/>
<dbReference type="OMA" id="TWHTQAR"/>
<dbReference type="OrthoDB" id="675023at2759"/>
<dbReference type="PhylomeDB" id="Q9VTG7"/>
<dbReference type="Reactome" id="R-DME-1971475">
    <property type="pathway name" value="A tetrasaccharide linker sequence is required for GAG synthesis"/>
</dbReference>
<dbReference type="UniPathway" id="UPA00378"/>
<dbReference type="BioGRID-ORCS" id="39262">
    <property type="hits" value="0 hits in 1 CRISPR screen"/>
</dbReference>
<dbReference type="GenomeRNAi" id="39262"/>
<dbReference type="PRO" id="PR:Q9VTG7"/>
<dbReference type="Proteomes" id="UP000000803">
    <property type="component" value="Chromosome 3L"/>
</dbReference>
<dbReference type="Bgee" id="FBgn0036144">
    <property type="expression patterns" value="Expressed in dorsal appendage forming follicle cell in ovary and 256 other cell types or tissues"/>
</dbReference>
<dbReference type="ExpressionAtlas" id="Q9VTG7">
    <property type="expression patterns" value="baseline and differential"/>
</dbReference>
<dbReference type="GO" id="GO:0005794">
    <property type="term" value="C:Golgi apparatus"/>
    <property type="evidence" value="ECO:0000314"/>
    <property type="project" value="FlyBase"/>
</dbReference>
<dbReference type="GO" id="GO:0000139">
    <property type="term" value="C:Golgi membrane"/>
    <property type="evidence" value="ECO:0000318"/>
    <property type="project" value="GO_Central"/>
</dbReference>
<dbReference type="GO" id="GO:0046988">
    <property type="term" value="F:asioloorosomucoid beta-1,3-glucuronosyltransferase activity"/>
    <property type="evidence" value="ECO:0000314"/>
    <property type="project" value="FlyBase"/>
</dbReference>
<dbReference type="GO" id="GO:0046989">
    <property type="term" value="F:galactosyl beta-1,3 N-acetylgalactosamine beta-1,3-glucuronosyltransferase activity"/>
    <property type="evidence" value="ECO:0000314"/>
    <property type="project" value="FlyBase"/>
</dbReference>
<dbReference type="GO" id="GO:0015018">
    <property type="term" value="F:galactosylgalactosylxylosylprotein 3-beta-glucuronosyltransferase activity"/>
    <property type="evidence" value="ECO:0000314"/>
    <property type="project" value="FlyBase"/>
</dbReference>
<dbReference type="GO" id="GO:0046872">
    <property type="term" value="F:metal ion binding"/>
    <property type="evidence" value="ECO:0007669"/>
    <property type="project" value="UniProtKB-KW"/>
</dbReference>
<dbReference type="GO" id="GO:0046987">
    <property type="term" value="F:N-acetyllactosamine beta-1,3-glucuronosyltransferase activity"/>
    <property type="evidence" value="ECO:0000314"/>
    <property type="project" value="FlyBase"/>
</dbReference>
<dbReference type="GO" id="GO:0005975">
    <property type="term" value="P:carbohydrate metabolic process"/>
    <property type="evidence" value="ECO:0000318"/>
    <property type="project" value="GO_Central"/>
</dbReference>
<dbReference type="GO" id="GO:0050650">
    <property type="term" value="P:chondroitin sulfate proteoglycan biosynthetic process"/>
    <property type="evidence" value="ECO:0000318"/>
    <property type="project" value="GO_Central"/>
</dbReference>
<dbReference type="GO" id="GO:0016267">
    <property type="term" value="P:core 1 O-glycan biosynthetic process"/>
    <property type="evidence" value="ECO:0000314"/>
    <property type="project" value="FlyBase"/>
</dbReference>
<dbReference type="GO" id="GO:0009101">
    <property type="term" value="P:glycoprotein biosynthetic process"/>
    <property type="evidence" value="ECO:0000303"/>
    <property type="project" value="FlyBase"/>
</dbReference>
<dbReference type="GO" id="GO:0006688">
    <property type="term" value="P:glycosphingolipid biosynthetic process"/>
    <property type="evidence" value="ECO:0000303"/>
    <property type="project" value="FlyBase"/>
</dbReference>
<dbReference type="GO" id="GO:0006487">
    <property type="term" value="P:protein N-linked glycosylation"/>
    <property type="evidence" value="ECO:0000314"/>
    <property type="project" value="FlyBase"/>
</dbReference>
<dbReference type="GO" id="GO:0030166">
    <property type="term" value="P:proteoglycan biosynthetic process"/>
    <property type="evidence" value="ECO:0000303"/>
    <property type="project" value="FlyBase"/>
</dbReference>
<dbReference type="CDD" id="cd00218">
    <property type="entry name" value="GlcAT-I"/>
    <property type="match status" value="1"/>
</dbReference>
<dbReference type="FunFam" id="3.90.550.10:FF:000044">
    <property type="entry name" value="Galactosylgalactosylxylosylprotein 3-beta-glucuronosyltransferase"/>
    <property type="match status" value="1"/>
</dbReference>
<dbReference type="Gene3D" id="3.90.550.10">
    <property type="entry name" value="Spore Coat Polysaccharide Biosynthesis Protein SpsA, Chain A"/>
    <property type="match status" value="1"/>
</dbReference>
<dbReference type="InterPro" id="IPR005027">
    <property type="entry name" value="Glyco_trans_43"/>
</dbReference>
<dbReference type="InterPro" id="IPR029044">
    <property type="entry name" value="Nucleotide-diphossugar_trans"/>
</dbReference>
<dbReference type="PANTHER" id="PTHR10896">
    <property type="entry name" value="GALACTOSYLGALACTOSYLXYLOSYLPROTEIN 3-BETA-GLUCURONOSYLTRANSFERASE BETA-1,3-GLUCURONYLTRANSFERASE"/>
    <property type="match status" value="1"/>
</dbReference>
<dbReference type="PANTHER" id="PTHR10896:SF50">
    <property type="entry name" value="GALACTOSYLGALACTOSYLXYLOSYLPROTEIN 3-BETA-GLUCURONOSYLTRANSFERASE P"/>
    <property type="match status" value="1"/>
</dbReference>
<dbReference type="Pfam" id="PF03360">
    <property type="entry name" value="Glyco_transf_43"/>
    <property type="match status" value="1"/>
</dbReference>
<dbReference type="SUPFAM" id="SSF53448">
    <property type="entry name" value="Nucleotide-diphospho-sugar transferases"/>
    <property type="match status" value="1"/>
</dbReference>
<dbReference type="PROSITE" id="PS00012">
    <property type="entry name" value="PHOSPHOPANTETHEINE"/>
    <property type="match status" value="1"/>
</dbReference>
<accession>Q9VTG7</accession>
<accession>Q5BI43</accession>
<accession>Q8MSC2</accession>
<accession>Q95RU4</accession>
<organism evidence="12">
    <name type="scientific">Drosophila melanogaster</name>
    <name type="common">Fruit fly</name>
    <dbReference type="NCBI Taxonomy" id="7227"/>
    <lineage>
        <taxon>Eukaryota</taxon>
        <taxon>Metazoa</taxon>
        <taxon>Ecdysozoa</taxon>
        <taxon>Arthropoda</taxon>
        <taxon>Hexapoda</taxon>
        <taxon>Insecta</taxon>
        <taxon>Pterygota</taxon>
        <taxon>Neoptera</taxon>
        <taxon>Endopterygota</taxon>
        <taxon>Diptera</taxon>
        <taxon>Brachycera</taxon>
        <taxon>Muscomorpha</taxon>
        <taxon>Ephydroidea</taxon>
        <taxon>Drosophilidae</taxon>
        <taxon>Drosophila</taxon>
        <taxon>Sophophora</taxon>
    </lineage>
</organism>